<accession>A5CFN6</accession>
<evidence type="ECO:0000255" key="1">
    <source>
        <dbReference type="HAMAP-Rule" id="MF_01351"/>
    </source>
</evidence>
<reference key="1">
    <citation type="journal article" date="2007" name="Proc. Natl. Acad. Sci. U.S.A.">
        <title>The Orientia tsutsugamushi genome reveals massive proliferation of conjugative type IV secretion system and host-cell interaction genes.</title>
        <authorList>
            <person name="Cho N.-H."/>
            <person name="Kim H.-R."/>
            <person name="Lee J.-H."/>
            <person name="Kim S.-Y."/>
            <person name="Kim J."/>
            <person name="Cha S."/>
            <person name="Kim S.-Y."/>
            <person name="Darby A.C."/>
            <person name="Fuxelius H.-H."/>
            <person name="Yin J."/>
            <person name="Kim J.H."/>
            <person name="Kim J."/>
            <person name="Lee S.J."/>
            <person name="Koh Y.-S."/>
            <person name="Jang W.-J."/>
            <person name="Park K.-H."/>
            <person name="Andersson S.G.E."/>
            <person name="Choi M.-S."/>
            <person name="Kim I.-S."/>
        </authorList>
    </citation>
    <scope>NUCLEOTIDE SEQUENCE [LARGE SCALE GENOMIC DNA]</scope>
    <source>
        <strain>Boryong</strain>
    </source>
</reference>
<protein>
    <recommendedName>
        <fullName evidence="1">NADH-quinone oxidoreductase subunit I</fullName>
        <ecNumber evidence="1">7.1.1.-</ecNumber>
    </recommendedName>
    <alternativeName>
        <fullName evidence="1">NADH dehydrogenase I subunit I</fullName>
    </alternativeName>
    <alternativeName>
        <fullName evidence="1">NDH-1 subunit I</fullName>
    </alternativeName>
</protein>
<proteinExistence type="inferred from homology"/>
<dbReference type="EC" id="7.1.1.-" evidence="1"/>
<dbReference type="EMBL" id="AM494475">
    <property type="protein sequence ID" value="CAM81256.1"/>
    <property type="molecule type" value="Genomic_DNA"/>
</dbReference>
<dbReference type="SMR" id="A5CFN6"/>
<dbReference type="KEGG" id="ots:OTBS_2161"/>
<dbReference type="eggNOG" id="COG1143">
    <property type="taxonomic scope" value="Bacteria"/>
</dbReference>
<dbReference type="HOGENOM" id="CLU_067218_5_1_5"/>
<dbReference type="Proteomes" id="UP000001565">
    <property type="component" value="Chromosome"/>
</dbReference>
<dbReference type="GO" id="GO:0005886">
    <property type="term" value="C:plasma membrane"/>
    <property type="evidence" value="ECO:0007669"/>
    <property type="project" value="UniProtKB-SubCell"/>
</dbReference>
<dbReference type="GO" id="GO:0051539">
    <property type="term" value="F:4 iron, 4 sulfur cluster binding"/>
    <property type="evidence" value="ECO:0007669"/>
    <property type="project" value="UniProtKB-KW"/>
</dbReference>
<dbReference type="GO" id="GO:0005506">
    <property type="term" value="F:iron ion binding"/>
    <property type="evidence" value="ECO:0007669"/>
    <property type="project" value="UniProtKB-UniRule"/>
</dbReference>
<dbReference type="GO" id="GO:0050136">
    <property type="term" value="F:NADH:ubiquinone reductase (non-electrogenic) activity"/>
    <property type="evidence" value="ECO:0007669"/>
    <property type="project" value="UniProtKB-UniRule"/>
</dbReference>
<dbReference type="GO" id="GO:0048038">
    <property type="term" value="F:quinone binding"/>
    <property type="evidence" value="ECO:0007669"/>
    <property type="project" value="UniProtKB-KW"/>
</dbReference>
<dbReference type="GO" id="GO:0009060">
    <property type="term" value="P:aerobic respiration"/>
    <property type="evidence" value="ECO:0007669"/>
    <property type="project" value="TreeGrafter"/>
</dbReference>
<dbReference type="FunFam" id="3.30.70.3270:FF:000001">
    <property type="entry name" value="NADH-quinone oxidoreductase subunit I 1"/>
    <property type="match status" value="1"/>
</dbReference>
<dbReference type="Gene3D" id="3.30.70.3270">
    <property type="match status" value="1"/>
</dbReference>
<dbReference type="HAMAP" id="MF_01351">
    <property type="entry name" value="NDH1_NuoI"/>
    <property type="match status" value="1"/>
</dbReference>
<dbReference type="InterPro" id="IPR017896">
    <property type="entry name" value="4Fe4S_Fe-S-bd"/>
</dbReference>
<dbReference type="InterPro" id="IPR017900">
    <property type="entry name" value="4Fe4S_Fe_S_CS"/>
</dbReference>
<dbReference type="InterPro" id="IPR010226">
    <property type="entry name" value="NADH_quinone_OxRdtase_chainI"/>
</dbReference>
<dbReference type="NCBIfam" id="TIGR01971">
    <property type="entry name" value="NuoI"/>
    <property type="match status" value="1"/>
</dbReference>
<dbReference type="NCBIfam" id="NF004538">
    <property type="entry name" value="PRK05888.1-4"/>
    <property type="match status" value="1"/>
</dbReference>
<dbReference type="NCBIfam" id="NF004539">
    <property type="entry name" value="PRK05888.1-5"/>
    <property type="match status" value="1"/>
</dbReference>
<dbReference type="PANTHER" id="PTHR10849:SF20">
    <property type="entry name" value="NADH DEHYDROGENASE [UBIQUINONE] IRON-SULFUR PROTEIN 8, MITOCHONDRIAL"/>
    <property type="match status" value="1"/>
</dbReference>
<dbReference type="PANTHER" id="PTHR10849">
    <property type="entry name" value="NADH DEHYDROGENASE UBIQUINONE IRON-SULFUR PROTEIN 8, MITOCHONDRIAL"/>
    <property type="match status" value="1"/>
</dbReference>
<dbReference type="Pfam" id="PF12838">
    <property type="entry name" value="Fer4_7"/>
    <property type="match status" value="1"/>
</dbReference>
<dbReference type="SUPFAM" id="SSF54862">
    <property type="entry name" value="4Fe-4S ferredoxins"/>
    <property type="match status" value="1"/>
</dbReference>
<dbReference type="PROSITE" id="PS00198">
    <property type="entry name" value="4FE4S_FER_1"/>
    <property type="match status" value="2"/>
</dbReference>
<dbReference type="PROSITE" id="PS51379">
    <property type="entry name" value="4FE4S_FER_2"/>
    <property type="match status" value="2"/>
</dbReference>
<name>NUOI_ORITB</name>
<comment type="function">
    <text evidence="1">NDH-1 shuttles electrons from NADH, via FMN and iron-sulfur (Fe-S) centers, to quinones in the respiratory chain. The immediate electron acceptor for the enzyme in this species is believed to be ubiquinone. Couples the redox reaction to proton translocation (for every two electrons transferred, four hydrogen ions are translocated across the cytoplasmic membrane), and thus conserves the redox energy in a proton gradient.</text>
</comment>
<comment type="catalytic activity">
    <reaction evidence="1">
        <text>a quinone + NADH + 5 H(+)(in) = a quinol + NAD(+) + 4 H(+)(out)</text>
        <dbReference type="Rhea" id="RHEA:57888"/>
        <dbReference type="ChEBI" id="CHEBI:15378"/>
        <dbReference type="ChEBI" id="CHEBI:24646"/>
        <dbReference type="ChEBI" id="CHEBI:57540"/>
        <dbReference type="ChEBI" id="CHEBI:57945"/>
        <dbReference type="ChEBI" id="CHEBI:132124"/>
    </reaction>
</comment>
<comment type="cofactor">
    <cofactor evidence="1">
        <name>[4Fe-4S] cluster</name>
        <dbReference type="ChEBI" id="CHEBI:49883"/>
    </cofactor>
    <text evidence="1">Binds 2 [4Fe-4S] clusters per subunit.</text>
</comment>
<comment type="subunit">
    <text evidence="1">NDH-1 is composed of 14 different subunits. Subunits NuoA, H, J, K, L, M, N constitute the membrane sector of the complex.</text>
</comment>
<comment type="subcellular location">
    <subcellularLocation>
        <location evidence="1">Cell inner membrane</location>
        <topology evidence="1">Peripheral membrane protein</topology>
    </subcellularLocation>
</comment>
<comment type="similarity">
    <text evidence="1">Belongs to the complex I 23 kDa subunit family.</text>
</comment>
<organism>
    <name type="scientific">Orientia tsutsugamushi (strain Boryong)</name>
    <name type="common">Rickettsia tsutsugamushi</name>
    <dbReference type="NCBI Taxonomy" id="357244"/>
    <lineage>
        <taxon>Bacteria</taxon>
        <taxon>Pseudomonadati</taxon>
        <taxon>Pseudomonadota</taxon>
        <taxon>Alphaproteobacteria</taxon>
        <taxon>Rickettsiales</taxon>
        <taxon>Rickettsiaceae</taxon>
        <taxon>Rickettsieae</taxon>
        <taxon>Orientia</taxon>
    </lineage>
</organism>
<feature type="chain" id="PRO_0000298526" description="NADH-quinone oxidoreductase subunit I">
    <location>
        <begin position="1"/>
        <end position="161"/>
    </location>
</feature>
<feature type="domain" description="4Fe-4S ferredoxin-type 1" evidence="1">
    <location>
        <begin position="52"/>
        <end position="82"/>
    </location>
</feature>
<feature type="domain" description="4Fe-4S ferredoxin-type 2" evidence="1">
    <location>
        <begin position="92"/>
        <end position="121"/>
    </location>
</feature>
<feature type="binding site" evidence="1">
    <location>
        <position position="62"/>
    </location>
    <ligand>
        <name>[4Fe-4S] cluster</name>
        <dbReference type="ChEBI" id="CHEBI:49883"/>
        <label>1</label>
    </ligand>
</feature>
<feature type="binding site" evidence="1">
    <location>
        <position position="65"/>
    </location>
    <ligand>
        <name>[4Fe-4S] cluster</name>
        <dbReference type="ChEBI" id="CHEBI:49883"/>
        <label>1</label>
    </ligand>
</feature>
<feature type="binding site" evidence="1">
    <location>
        <position position="68"/>
    </location>
    <ligand>
        <name>[4Fe-4S] cluster</name>
        <dbReference type="ChEBI" id="CHEBI:49883"/>
        <label>1</label>
    </ligand>
</feature>
<feature type="binding site" evidence="1">
    <location>
        <position position="72"/>
    </location>
    <ligand>
        <name>[4Fe-4S] cluster</name>
        <dbReference type="ChEBI" id="CHEBI:49883"/>
        <label>2</label>
    </ligand>
</feature>
<feature type="binding site" evidence="1">
    <location>
        <position position="101"/>
    </location>
    <ligand>
        <name>[4Fe-4S] cluster</name>
        <dbReference type="ChEBI" id="CHEBI:49883"/>
        <label>2</label>
    </ligand>
</feature>
<feature type="binding site" evidence="1">
    <location>
        <position position="104"/>
    </location>
    <ligand>
        <name>[4Fe-4S] cluster</name>
        <dbReference type="ChEBI" id="CHEBI:49883"/>
        <label>2</label>
    </ligand>
</feature>
<feature type="binding site" evidence="1">
    <location>
        <position position="107"/>
    </location>
    <ligand>
        <name>[4Fe-4S] cluster</name>
        <dbReference type="ChEBI" id="CHEBI:49883"/>
        <label>2</label>
    </ligand>
</feature>
<feature type="binding site" evidence="1">
    <location>
        <position position="111"/>
    </location>
    <ligand>
        <name>[4Fe-4S] cluster</name>
        <dbReference type="ChEBI" id="CHEBI:49883"/>
        <label>1</label>
    </ligand>
</feature>
<gene>
    <name evidence="1" type="primary">nuoI</name>
    <name type="ordered locus">OTBS_2161</name>
</gene>
<keyword id="KW-0004">4Fe-4S</keyword>
<keyword id="KW-0997">Cell inner membrane</keyword>
<keyword id="KW-1003">Cell membrane</keyword>
<keyword id="KW-0408">Iron</keyword>
<keyword id="KW-0411">Iron-sulfur</keyword>
<keyword id="KW-0472">Membrane</keyword>
<keyword id="KW-0479">Metal-binding</keyword>
<keyword id="KW-0520">NAD</keyword>
<keyword id="KW-0874">Quinone</keyword>
<keyword id="KW-1185">Reference proteome</keyword>
<keyword id="KW-0677">Repeat</keyword>
<keyword id="KW-1278">Translocase</keyword>
<keyword id="KW-0830">Ubiquinone</keyword>
<sequence length="161" mass="18641">MKITNFTKSFLLYEIIVGMFLTLKYFFKSKVTIRYPNEVSKLSPRFKGEHALRRYPDGEERCIACKLCEAICPAQAITIEAKEQPNGSRRTTKYDIDMTKCIYCGLCQEACPVDAIVEGPNLEFATETHQELLYNKEKLLRNGDMWEHVIAKNLKVDSIYR</sequence>